<dbReference type="EC" id="3.6.1.27" evidence="1"/>
<dbReference type="EMBL" id="CP000936">
    <property type="protein sequence ID" value="ACA37015.1"/>
    <property type="molecule type" value="Genomic_DNA"/>
</dbReference>
<dbReference type="RefSeq" id="WP_000280773.1">
    <property type="nucleotide sequence ID" value="NC_010380.1"/>
</dbReference>
<dbReference type="SMR" id="B1I9P6"/>
<dbReference type="KEGG" id="spv:SPH_0565"/>
<dbReference type="HOGENOM" id="CLU_060296_2_0_9"/>
<dbReference type="Proteomes" id="UP000002163">
    <property type="component" value="Chromosome"/>
</dbReference>
<dbReference type="GO" id="GO:0005886">
    <property type="term" value="C:plasma membrane"/>
    <property type="evidence" value="ECO:0007669"/>
    <property type="project" value="UniProtKB-SubCell"/>
</dbReference>
<dbReference type="GO" id="GO:0050380">
    <property type="term" value="F:undecaprenyl-diphosphatase activity"/>
    <property type="evidence" value="ECO:0007669"/>
    <property type="project" value="UniProtKB-UniRule"/>
</dbReference>
<dbReference type="GO" id="GO:0071555">
    <property type="term" value="P:cell wall organization"/>
    <property type="evidence" value="ECO:0007669"/>
    <property type="project" value="UniProtKB-KW"/>
</dbReference>
<dbReference type="GO" id="GO:0009252">
    <property type="term" value="P:peptidoglycan biosynthetic process"/>
    <property type="evidence" value="ECO:0007669"/>
    <property type="project" value="UniProtKB-KW"/>
</dbReference>
<dbReference type="GO" id="GO:0008360">
    <property type="term" value="P:regulation of cell shape"/>
    <property type="evidence" value="ECO:0007669"/>
    <property type="project" value="UniProtKB-KW"/>
</dbReference>
<dbReference type="GO" id="GO:0046677">
    <property type="term" value="P:response to antibiotic"/>
    <property type="evidence" value="ECO:0007669"/>
    <property type="project" value="UniProtKB-UniRule"/>
</dbReference>
<dbReference type="HAMAP" id="MF_01006">
    <property type="entry name" value="Undec_diphosphatase"/>
    <property type="match status" value="1"/>
</dbReference>
<dbReference type="InterPro" id="IPR003824">
    <property type="entry name" value="UppP"/>
</dbReference>
<dbReference type="NCBIfam" id="NF001391">
    <property type="entry name" value="PRK00281.1-5"/>
    <property type="match status" value="1"/>
</dbReference>
<dbReference type="PANTHER" id="PTHR30622">
    <property type="entry name" value="UNDECAPRENYL-DIPHOSPHATASE"/>
    <property type="match status" value="1"/>
</dbReference>
<dbReference type="PANTHER" id="PTHR30622:SF3">
    <property type="entry name" value="UNDECAPRENYL-DIPHOSPHATASE"/>
    <property type="match status" value="1"/>
</dbReference>
<dbReference type="Pfam" id="PF02673">
    <property type="entry name" value="BacA"/>
    <property type="match status" value="1"/>
</dbReference>
<keyword id="KW-0046">Antibiotic resistance</keyword>
<keyword id="KW-1003">Cell membrane</keyword>
<keyword id="KW-0133">Cell shape</keyword>
<keyword id="KW-0961">Cell wall biogenesis/degradation</keyword>
<keyword id="KW-0378">Hydrolase</keyword>
<keyword id="KW-0472">Membrane</keyword>
<keyword id="KW-0573">Peptidoglycan synthesis</keyword>
<keyword id="KW-0812">Transmembrane</keyword>
<keyword id="KW-1133">Transmembrane helix</keyword>
<name>UPPP_STRPI</name>
<organism>
    <name type="scientific">Streptococcus pneumoniae (strain Hungary19A-6)</name>
    <dbReference type="NCBI Taxonomy" id="487214"/>
    <lineage>
        <taxon>Bacteria</taxon>
        <taxon>Bacillati</taxon>
        <taxon>Bacillota</taxon>
        <taxon>Bacilli</taxon>
        <taxon>Lactobacillales</taxon>
        <taxon>Streptococcaceae</taxon>
        <taxon>Streptococcus</taxon>
    </lineage>
</organism>
<comment type="function">
    <text evidence="1">Catalyzes the dephosphorylation of undecaprenyl diphosphate (UPP). Confers resistance to bacitracin.</text>
</comment>
<comment type="catalytic activity">
    <reaction evidence="1">
        <text>di-trans,octa-cis-undecaprenyl diphosphate + H2O = di-trans,octa-cis-undecaprenyl phosphate + phosphate + H(+)</text>
        <dbReference type="Rhea" id="RHEA:28094"/>
        <dbReference type="ChEBI" id="CHEBI:15377"/>
        <dbReference type="ChEBI" id="CHEBI:15378"/>
        <dbReference type="ChEBI" id="CHEBI:43474"/>
        <dbReference type="ChEBI" id="CHEBI:58405"/>
        <dbReference type="ChEBI" id="CHEBI:60392"/>
        <dbReference type="EC" id="3.6.1.27"/>
    </reaction>
</comment>
<comment type="subcellular location">
    <subcellularLocation>
        <location evidence="1">Cell membrane</location>
        <topology evidence="1">Multi-pass membrane protein</topology>
    </subcellularLocation>
</comment>
<comment type="miscellaneous">
    <text>Bacitracin is thought to be involved in the inhibition of peptidoglycan synthesis by sequestering undecaprenyl diphosphate, thereby reducing the pool of lipid carrier available.</text>
</comment>
<comment type="similarity">
    <text evidence="1">Belongs to the UppP family.</text>
</comment>
<protein>
    <recommendedName>
        <fullName evidence="1">Undecaprenyl-diphosphatase</fullName>
        <ecNumber evidence="1">3.6.1.27</ecNumber>
    </recommendedName>
    <alternativeName>
        <fullName evidence="1">Bacitracin resistance protein</fullName>
    </alternativeName>
    <alternativeName>
        <fullName evidence="1">Undecaprenyl pyrophosphate phosphatase</fullName>
    </alternativeName>
</protein>
<feature type="chain" id="PRO_1000197411" description="Undecaprenyl-diphosphatase">
    <location>
        <begin position="1"/>
        <end position="281"/>
    </location>
</feature>
<feature type="transmembrane region" description="Helical" evidence="1">
    <location>
        <begin position="4"/>
        <end position="24"/>
    </location>
</feature>
<feature type="transmembrane region" description="Helical" evidence="1">
    <location>
        <begin position="45"/>
        <end position="65"/>
    </location>
</feature>
<feature type="transmembrane region" description="Helical" evidence="1">
    <location>
        <begin position="89"/>
        <end position="109"/>
    </location>
</feature>
<feature type="transmembrane region" description="Helical" evidence="1">
    <location>
        <begin position="113"/>
        <end position="133"/>
    </location>
</feature>
<feature type="transmembrane region" description="Helical" evidence="1">
    <location>
        <begin position="152"/>
        <end position="172"/>
    </location>
</feature>
<feature type="transmembrane region" description="Helical" evidence="1">
    <location>
        <begin position="190"/>
        <end position="210"/>
    </location>
</feature>
<feature type="transmembrane region" description="Helical" evidence="1">
    <location>
        <begin position="225"/>
        <end position="245"/>
    </location>
</feature>
<feature type="transmembrane region" description="Helical" evidence="1">
    <location>
        <begin position="257"/>
        <end position="277"/>
    </location>
</feature>
<reference key="1">
    <citation type="journal article" date="2010" name="Genome Biol.">
        <title>Structure and dynamics of the pan-genome of Streptococcus pneumoniae and closely related species.</title>
        <authorList>
            <person name="Donati C."/>
            <person name="Hiller N.L."/>
            <person name="Tettelin H."/>
            <person name="Muzzi A."/>
            <person name="Croucher N.J."/>
            <person name="Angiuoli S.V."/>
            <person name="Oggioni M."/>
            <person name="Dunning Hotopp J.C."/>
            <person name="Hu F.Z."/>
            <person name="Riley D.R."/>
            <person name="Covacci A."/>
            <person name="Mitchell T.J."/>
            <person name="Bentley S.D."/>
            <person name="Kilian M."/>
            <person name="Ehrlich G.D."/>
            <person name="Rappuoli R."/>
            <person name="Moxon E.R."/>
            <person name="Masignani V."/>
        </authorList>
    </citation>
    <scope>NUCLEOTIDE SEQUENCE [LARGE SCALE GENOMIC DNA]</scope>
    <source>
        <strain>Hungary19A-6</strain>
    </source>
</reference>
<sequence>MYLIEILKSIFFGIVEGITEWLPISSTGHLILAEEFIQYQNQNEAFMSMFNVVIQLGAILAVMVIYFNKLNPFKPTKDKQEVRKTWRLWLKVLIATLPLLGVFKFDDWFDTHFHNMVSVALMLIIYGVAFIYLEKRNKARAIEPSVTELDKLPYTTAFYIGLFQVLALLPGTSRSGATIVGGLLNGTSRSVVTEFTFYLGIPVMFGASALKIFKFVKAGELLSFGQLFLLLVAMGVAFAVSMVAIRFLTSYVKKHDFTLFGKYRIVLGSVLLLYSFVRLFV</sequence>
<gene>
    <name evidence="1" type="primary">uppP</name>
    <name type="ordered locus">SPH_0565</name>
</gene>
<evidence type="ECO:0000255" key="1">
    <source>
        <dbReference type="HAMAP-Rule" id="MF_01006"/>
    </source>
</evidence>
<proteinExistence type="inferred from homology"/>
<accession>B1I9P6</accession>